<sequence>MICRFIDTHCHFDFPPFSGDEEASLQRAAQAGVGKIIVPATEAENFARVLALAENYQPLYAALGLHPGMLEKHSDVSLEQLQQALERRPAKVVAVGEIGLDLFGDDPQFERQQWLLDEQLKLAKRYDLPVILHSRRTHDKLAMHLKRHDLPRTGVVHGFSGSLQQAERFVQLGYKIGVGGTITYPRASKTRDVIAKLPLASLLLETDAPDMPLNGFQGQPNRPEQAARVFAVLCELRREPADEIAQALLNNTYTLFNVP</sequence>
<protein>
    <recommendedName>
        <fullName evidence="2">Uncharacterized metal-dependent hydrolase YjjV</fullName>
        <ecNumber evidence="2">3.1.-.-</ecNumber>
    </recommendedName>
</protein>
<accession>P39408</accession>
<accession>P78143</accession>
<accession>Q2M5T9</accession>
<dbReference type="EC" id="3.1.-.-" evidence="2"/>
<dbReference type="EMBL" id="U14003">
    <property type="protein sequence ID" value="AAA97274.1"/>
    <property type="status" value="ALT_INIT"/>
    <property type="molecule type" value="Genomic_DNA"/>
</dbReference>
<dbReference type="EMBL" id="U00096">
    <property type="protein sequence ID" value="AAC77331.2"/>
    <property type="molecule type" value="Genomic_DNA"/>
</dbReference>
<dbReference type="EMBL" id="AP009048">
    <property type="protein sequence ID" value="BAE78367.1"/>
    <property type="molecule type" value="Genomic_DNA"/>
</dbReference>
<dbReference type="PIR" id="S56602">
    <property type="entry name" value="S56602"/>
</dbReference>
<dbReference type="RefSeq" id="WP_000563040.1">
    <property type="nucleotide sequence ID" value="NZ_LN832404.1"/>
</dbReference>
<dbReference type="RefSeq" id="YP_026291.2">
    <property type="nucleotide sequence ID" value="NC_000913.3"/>
</dbReference>
<dbReference type="PDB" id="1ZZM">
    <property type="method" value="X-ray"/>
    <property type="resolution" value="1.80 A"/>
    <property type="chains" value="A=1-259"/>
</dbReference>
<dbReference type="PDBsum" id="1ZZM"/>
<dbReference type="SMR" id="P39408"/>
<dbReference type="BioGRID" id="4261644">
    <property type="interactions" value="74"/>
</dbReference>
<dbReference type="DIP" id="DIP-12661N"/>
<dbReference type="FunCoup" id="P39408">
    <property type="interactions" value="55"/>
</dbReference>
<dbReference type="IntAct" id="P39408">
    <property type="interactions" value="4"/>
</dbReference>
<dbReference type="STRING" id="511145.b4378"/>
<dbReference type="jPOST" id="P39408"/>
<dbReference type="PaxDb" id="511145-b4378"/>
<dbReference type="EnsemblBacteria" id="AAC77331">
    <property type="protein sequence ID" value="AAC77331"/>
    <property type="gene ID" value="b4378"/>
</dbReference>
<dbReference type="GeneID" id="2847741"/>
<dbReference type="KEGG" id="ecj:JW4341"/>
<dbReference type="KEGG" id="eco:b4378"/>
<dbReference type="KEGG" id="ecoc:C3026_23655"/>
<dbReference type="PATRIC" id="fig|511145.12.peg.4524"/>
<dbReference type="EchoBASE" id="EB2483"/>
<dbReference type="eggNOG" id="COG0084">
    <property type="taxonomic scope" value="Bacteria"/>
</dbReference>
<dbReference type="HOGENOM" id="CLU_031506_0_1_6"/>
<dbReference type="InParanoid" id="P39408"/>
<dbReference type="OMA" id="HDAKSWE"/>
<dbReference type="OrthoDB" id="9810005at2"/>
<dbReference type="PhylomeDB" id="P39408"/>
<dbReference type="BioCyc" id="EcoCyc:G7952-MONOMER"/>
<dbReference type="EvolutionaryTrace" id="P39408"/>
<dbReference type="PRO" id="PR:P39408"/>
<dbReference type="Proteomes" id="UP000000625">
    <property type="component" value="Chromosome"/>
</dbReference>
<dbReference type="GO" id="GO:0005829">
    <property type="term" value="C:cytosol"/>
    <property type="evidence" value="ECO:0000318"/>
    <property type="project" value="GO_Central"/>
</dbReference>
<dbReference type="GO" id="GO:0016788">
    <property type="term" value="F:hydrolase activity, acting on ester bonds"/>
    <property type="evidence" value="ECO:0007669"/>
    <property type="project" value="InterPro"/>
</dbReference>
<dbReference type="GO" id="GO:0046872">
    <property type="term" value="F:metal ion binding"/>
    <property type="evidence" value="ECO:0007669"/>
    <property type="project" value="UniProtKB-KW"/>
</dbReference>
<dbReference type="CDD" id="cd01310">
    <property type="entry name" value="TatD_DNAse"/>
    <property type="match status" value="1"/>
</dbReference>
<dbReference type="FunFam" id="3.20.20.140:FF:000005">
    <property type="entry name" value="TatD family hydrolase"/>
    <property type="match status" value="1"/>
</dbReference>
<dbReference type="Gene3D" id="3.20.20.140">
    <property type="entry name" value="Metal-dependent hydrolases"/>
    <property type="match status" value="1"/>
</dbReference>
<dbReference type="InterPro" id="IPR018228">
    <property type="entry name" value="DNase_TatD-rel_CS"/>
</dbReference>
<dbReference type="InterPro" id="IPR032466">
    <property type="entry name" value="Metal_Hydrolase"/>
</dbReference>
<dbReference type="InterPro" id="IPR001130">
    <property type="entry name" value="TatD-like"/>
</dbReference>
<dbReference type="NCBIfam" id="NF008522">
    <property type="entry name" value="PRK11449.1"/>
    <property type="match status" value="1"/>
</dbReference>
<dbReference type="PANTHER" id="PTHR46124">
    <property type="entry name" value="D-AMINOACYL-TRNA DEACYLASE"/>
    <property type="match status" value="1"/>
</dbReference>
<dbReference type="PANTHER" id="PTHR46124:SF3">
    <property type="entry name" value="HYDROLASE"/>
    <property type="match status" value="1"/>
</dbReference>
<dbReference type="Pfam" id="PF01026">
    <property type="entry name" value="TatD_DNase"/>
    <property type="match status" value="1"/>
</dbReference>
<dbReference type="PIRSF" id="PIRSF005902">
    <property type="entry name" value="DNase_TatD"/>
    <property type="match status" value="1"/>
</dbReference>
<dbReference type="SUPFAM" id="SSF51556">
    <property type="entry name" value="Metallo-dependent hydrolases"/>
    <property type="match status" value="1"/>
</dbReference>
<dbReference type="PROSITE" id="PS01137">
    <property type="entry name" value="TATD_1"/>
    <property type="match status" value="1"/>
</dbReference>
<dbReference type="PROSITE" id="PS01090">
    <property type="entry name" value="TATD_2"/>
    <property type="match status" value="1"/>
</dbReference>
<dbReference type="PROSITE" id="PS01091">
    <property type="entry name" value="TATD_3"/>
    <property type="match status" value="1"/>
</dbReference>
<comment type="cofactor">
    <cofactor evidence="1">
        <name>a divalent metal cation</name>
        <dbReference type="ChEBI" id="CHEBI:60240"/>
    </cofactor>
    <text evidence="1">Binds 2 divalent metal cations per subunit.</text>
</comment>
<comment type="interaction">
    <interactant intactId="EBI-561387">
        <id>P39408</id>
    </interactant>
    <interactant intactId="EBI-301077">
        <id>P0CE47</id>
        <label>tufA</label>
    </interactant>
    <organismsDiffer>false</organismsDiffer>
    <experiments>2</experiments>
</comment>
<comment type="similarity">
    <text evidence="2">Belongs to the metallo-dependent hydrolases superfamily. TatD-type hydrolase family.</text>
</comment>
<comment type="sequence caution" evidence="2">
    <conflict type="erroneous initiation">
        <sequence resource="EMBL-CDS" id="AAA97274"/>
    </conflict>
    <text>Truncated N-terminus.</text>
</comment>
<keyword id="KW-0002">3D-structure</keyword>
<keyword id="KW-0378">Hydrolase</keyword>
<keyword id="KW-0479">Metal-binding</keyword>
<keyword id="KW-1185">Reference proteome</keyword>
<reference key="1">
    <citation type="journal article" date="1995" name="Nucleic Acids Res.">
        <title>Analysis of the Escherichia coli genome VI: DNA sequence of the region from 92.8 through 100 minutes.</title>
        <authorList>
            <person name="Burland V.D."/>
            <person name="Plunkett G. III"/>
            <person name="Sofia H.J."/>
            <person name="Daniels D.L."/>
            <person name="Blattner F.R."/>
        </authorList>
    </citation>
    <scope>NUCLEOTIDE SEQUENCE [LARGE SCALE GENOMIC DNA]</scope>
    <source>
        <strain>K12 / MG1655 / ATCC 47076</strain>
    </source>
</reference>
<reference key="2">
    <citation type="journal article" date="1997" name="Science">
        <title>The complete genome sequence of Escherichia coli K-12.</title>
        <authorList>
            <person name="Blattner F.R."/>
            <person name="Plunkett G. III"/>
            <person name="Bloch C.A."/>
            <person name="Perna N.T."/>
            <person name="Burland V."/>
            <person name="Riley M."/>
            <person name="Collado-Vides J."/>
            <person name="Glasner J.D."/>
            <person name="Rode C.K."/>
            <person name="Mayhew G.F."/>
            <person name="Gregor J."/>
            <person name="Davis N.W."/>
            <person name="Kirkpatrick H.A."/>
            <person name="Goeden M.A."/>
            <person name="Rose D.J."/>
            <person name="Mau B."/>
            <person name="Shao Y."/>
        </authorList>
    </citation>
    <scope>NUCLEOTIDE SEQUENCE [LARGE SCALE GENOMIC DNA]</scope>
    <source>
        <strain>K12 / MG1655 / ATCC 47076</strain>
    </source>
</reference>
<reference key="3">
    <citation type="journal article" date="2006" name="Mol. Syst. Biol.">
        <title>Highly accurate genome sequences of Escherichia coli K-12 strains MG1655 and W3110.</title>
        <authorList>
            <person name="Hayashi K."/>
            <person name="Morooka N."/>
            <person name="Yamamoto Y."/>
            <person name="Fujita K."/>
            <person name="Isono K."/>
            <person name="Choi S."/>
            <person name="Ohtsubo E."/>
            <person name="Baba T."/>
            <person name="Wanner B.L."/>
            <person name="Mori H."/>
            <person name="Horiuchi T."/>
        </authorList>
    </citation>
    <scope>NUCLEOTIDE SEQUENCE [LARGE SCALE GENOMIC DNA]</scope>
    <source>
        <strain>K12 / W3110 / ATCC 27325 / DSM 5911</strain>
    </source>
</reference>
<reference key="4">
    <citation type="submission" date="2009-02" db="PDB data bank">
        <title>Crystal structure of yjjV, tatD homolog from Escherichia coli K12, at 1.8 A resolution.</title>
        <authorList>
            <consortium name="New York structural genomics research consortium (NYSGRC)"/>
        </authorList>
    </citation>
    <scope>X-RAY CRYSTALLOGRAPHY (1.8 ANGSTROMS) IN COMPLEX WITH ZINC IONS</scope>
</reference>
<gene>
    <name type="primary">yjjV</name>
    <name type="ordered locus">b4378</name>
    <name type="ordered locus">JW4341</name>
</gene>
<organism>
    <name type="scientific">Escherichia coli (strain K12)</name>
    <dbReference type="NCBI Taxonomy" id="83333"/>
    <lineage>
        <taxon>Bacteria</taxon>
        <taxon>Pseudomonadati</taxon>
        <taxon>Pseudomonadota</taxon>
        <taxon>Gammaproteobacteria</taxon>
        <taxon>Enterobacterales</taxon>
        <taxon>Enterobacteriaceae</taxon>
        <taxon>Escherichia</taxon>
    </lineage>
</organism>
<evidence type="ECO:0000269" key="1">
    <source ref="4"/>
</evidence>
<evidence type="ECO:0000305" key="2"/>
<evidence type="ECO:0007829" key="3">
    <source>
        <dbReference type="PDB" id="1ZZM"/>
    </source>
</evidence>
<name>YJJV_ECOLI</name>
<feature type="chain" id="PRO_0000201999" description="Uncharacterized metal-dependent hydrolase YjjV">
    <location>
        <begin position="1"/>
        <end position="259"/>
    </location>
</feature>
<feature type="binding site" evidence="1">
    <location>
        <position position="9"/>
    </location>
    <ligand>
        <name>a divalent metal cation</name>
        <dbReference type="ChEBI" id="CHEBI:60240"/>
        <label>1</label>
    </ligand>
</feature>
<feature type="binding site" evidence="1">
    <location>
        <position position="11"/>
    </location>
    <ligand>
        <name>a divalent metal cation</name>
        <dbReference type="ChEBI" id="CHEBI:60240"/>
        <label>1</label>
    </ligand>
</feature>
<feature type="binding site" evidence="1">
    <location>
        <position position="97"/>
    </location>
    <ligand>
        <name>a divalent metal cation</name>
        <dbReference type="ChEBI" id="CHEBI:60240"/>
        <label>1</label>
    </ligand>
</feature>
<feature type="binding site" evidence="1">
    <location>
        <position position="97"/>
    </location>
    <ligand>
        <name>a divalent metal cation</name>
        <dbReference type="ChEBI" id="CHEBI:60240"/>
        <label>2</label>
    </ligand>
</feature>
<feature type="binding site" evidence="1">
    <location>
        <position position="133"/>
    </location>
    <ligand>
        <name>a divalent metal cation</name>
        <dbReference type="ChEBI" id="CHEBI:60240"/>
        <label>2</label>
    </ligand>
</feature>
<feature type="binding site" evidence="1">
    <location>
        <position position="157"/>
    </location>
    <ligand>
        <name>a divalent metal cation</name>
        <dbReference type="ChEBI" id="CHEBI:60240"/>
        <label>2</label>
    </ligand>
</feature>
<feature type="binding site" evidence="1">
    <location>
        <position position="207"/>
    </location>
    <ligand>
        <name>a divalent metal cation</name>
        <dbReference type="ChEBI" id="CHEBI:60240"/>
        <label>1</label>
    </ligand>
</feature>
<feature type="strand" evidence="3">
    <location>
        <begin position="5"/>
        <end position="8"/>
    </location>
</feature>
<feature type="turn" evidence="3">
    <location>
        <begin position="15"/>
        <end position="19"/>
    </location>
</feature>
<feature type="helix" evidence="3">
    <location>
        <begin position="21"/>
        <end position="30"/>
    </location>
</feature>
<feature type="strand" evidence="3">
    <location>
        <begin position="33"/>
        <end position="39"/>
    </location>
</feature>
<feature type="helix" evidence="3">
    <location>
        <begin position="43"/>
        <end position="45"/>
    </location>
</feature>
<feature type="helix" evidence="3">
    <location>
        <begin position="46"/>
        <end position="55"/>
    </location>
</feature>
<feature type="strand" evidence="3">
    <location>
        <begin position="59"/>
        <end position="63"/>
    </location>
</feature>
<feature type="helix" evidence="3">
    <location>
        <begin position="67"/>
        <end position="72"/>
    </location>
</feature>
<feature type="helix" evidence="3">
    <location>
        <begin position="75"/>
        <end position="87"/>
    </location>
</feature>
<feature type="strand" evidence="3">
    <location>
        <begin position="90"/>
        <end position="101"/>
    </location>
</feature>
<feature type="helix" evidence="3">
    <location>
        <begin position="109"/>
        <end position="125"/>
    </location>
</feature>
<feature type="strand" evidence="3">
    <location>
        <begin position="130"/>
        <end position="136"/>
    </location>
</feature>
<feature type="helix" evidence="3">
    <location>
        <begin position="138"/>
        <end position="148"/>
    </location>
</feature>
<feature type="strand" evidence="3">
    <location>
        <begin position="154"/>
        <end position="156"/>
    </location>
</feature>
<feature type="helix" evidence="3">
    <location>
        <begin position="163"/>
        <end position="171"/>
    </location>
</feature>
<feature type="strand" evidence="3">
    <location>
        <begin position="175"/>
        <end position="178"/>
    </location>
</feature>
<feature type="helix" evidence="3">
    <location>
        <begin position="180"/>
        <end position="183"/>
    </location>
</feature>
<feature type="turn" evidence="3">
    <location>
        <begin position="185"/>
        <end position="187"/>
    </location>
</feature>
<feature type="helix" evidence="3">
    <location>
        <begin position="190"/>
        <end position="196"/>
    </location>
</feature>
<feature type="helix" evidence="3">
    <location>
        <begin position="199"/>
        <end position="201"/>
    </location>
</feature>
<feature type="strand" evidence="3">
    <location>
        <begin position="202"/>
        <end position="204"/>
    </location>
</feature>
<feature type="helix" evidence="3">
    <location>
        <begin position="223"/>
        <end position="225"/>
    </location>
</feature>
<feature type="helix" evidence="3">
    <location>
        <begin position="226"/>
        <end position="236"/>
    </location>
</feature>
<feature type="helix" evidence="3">
    <location>
        <begin position="241"/>
        <end position="256"/>
    </location>
</feature>
<proteinExistence type="evidence at protein level"/>